<proteinExistence type="inferred from homology"/>
<keyword id="KW-0066">ATP synthesis</keyword>
<keyword id="KW-0067">ATP-binding</keyword>
<keyword id="KW-1003">Cell membrane</keyword>
<keyword id="KW-0139">CF(1)</keyword>
<keyword id="KW-0375">Hydrogen ion transport</keyword>
<keyword id="KW-0406">Ion transport</keyword>
<keyword id="KW-0472">Membrane</keyword>
<keyword id="KW-0547">Nucleotide-binding</keyword>
<keyword id="KW-1278">Translocase</keyword>
<keyword id="KW-0813">Transport</keyword>
<reference key="1">
    <citation type="submission" date="2007-06" db="EMBL/GenBank/DDBJ databases">
        <authorList>
            <person name="Brinkac L.M."/>
            <person name="Daugherty S."/>
            <person name="Dodson R.J."/>
            <person name="Madupu R."/>
            <person name="Brown J.L."/>
            <person name="Bruce D."/>
            <person name="Detter C."/>
            <person name="Munk C."/>
            <person name="Smith L.A."/>
            <person name="Smith T.J."/>
            <person name="White O."/>
            <person name="Brettin T.S."/>
        </authorList>
    </citation>
    <scope>NUCLEOTIDE SEQUENCE [LARGE SCALE GENOMIC DNA]</scope>
    <source>
        <strain>Langeland / NCTC 10281 / Type F</strain>
    </source>
</reference>
<dbReference type="EC" id="7.1.2.2" evidence="1"/>
<dbReference type="EMBL" id="CP000728">
    <property type="protein sequence ID" value="ABS39575.1"/>
    <property type="molecule type" value="Genomic_DNA"/>
</dbReference>
<dbReference type="RefSeq" id="WP_011987239.1">
    <property type="nucleotide sequence ID" value="NC_009699.1"/>
</dbReference>
<dbReference type="SMR" id="A7G9Q7"/>
<dbReference type="KEGG" id="cbf:CLI_0209"/>
<dbReference type="HOGENOM" id="CLU_010091_2_1_9"/>
<dbReference type="Proteomes" id="UP000002410">
    <property type="component" value="Chromosome"/>
</dbReference>
<dbReference type="GO" id="GO:0005886">
    <property type="term" value="C:plasma membrane"/>
    <property type="evidence" value="ECO:0007669"/>
    <property type="project" value="UniProtKB-SubCell"/>
</dbReference>
<dbReference type="GO" id="GO:0045259">
    <property type="term" value="C:proton-transporting ATP synthase complex"/>
    <property type="evidence" value="ECO:0007669"/>
    <property type="project" value="UniProtKB-KW"/>
</dbReference>
<dbReference type="GO" id="GO:0043531">
    <property type="term" value="F:ADP binding"/>
    <property type="evidence" value="ECO:0007669"/>
    <property type="project" value="TreeGrafter"/>
</dbReference>
<dbReference type="GO" id="GO:0005524">
    <property type="term" value="F:ATP binding"/>
    <property type="evidence" value="ECO:0007669"/>
    <property type="project" value="UniProtKB-UniRule"/>
</dbReference>
<dbReference type="GO" id="GO:0046933">
    <property type="term" value="F:proton-transporting ATP synthase activity, rotational mechanism"/>
    <property type="evidence" value="ECO:0007669"/>
    <property type="project" value="UniProtKB-UniRule"/>
</dbReference>
<dbReference type="CDD" id="cd18113">
    <property type="entry name" value="ATP-synt_F1_alpha_C"/>
    <property type="match status" value="1"/>
</dbReference>
<dbReference type="CDD" id="cd18116">
    <property type="entry name" value="ATP-synt_F1_alpha_N"/>
    <property type="match status" value="1"/>
</dbReference>
<dbReference type="CDD" id="cd01132">
    <property type="entry name" value="F1-ATPase_alpha_CD"/>
    <property type="match status" value="1"/>
</dbReference>
<dbReference type="FunFam" id="1.20.150.20:FF:000001">
    <property type="entry name" value="ATP synthase subunit alpha"/>
    <property type="match status" value="1"/>
</dbReference>
<dbReference type="FunFam" id="2.40.30.20:FF:000001">
    <property type="entry name" value="ATP synthase subunit alpha"/>
    <property type="match status" value="1"/>
</dbReference>
<dbReference type="FunFam" id="3.40.50.300:FF:000002">
    <property type="entry name" value="ATP synthase subunit alpha"/>
    <property type="match status" value="1"/>
</dbReference>
<dbReference type="Gene3D" id="2.40.30.20">
    <property type="match status" value="1"/>
</dbReference>
<dbReference type="Gene3D" id="1.20.150.20">
    <property type="entry name" value="ATP synthase alpha/beta chain, C-terminal domain"/>
    <property type="match status" value="1"/>
</dbReference>
<dbReference type="Gene3D" id="3.40.50.300">
    <property type="entry name" value="P-loop containing nucleotide triphosphate hydrolases"/>
    <property type="match status" value="1"/>
</dbReference>
<dbReference type="HAMAP" id="MF_01346">
    <property type="entry name" value="ATP_synth_alpha_bact"/>
    <property type="match status" value="1"/>
</dbReference>
<dbReference type="InterPro" id="IPR023366">
    <property type="entry name" value="ATP_synth_asu-like_sf"/>
</dbReference>
<dbReference type="InterPro" id="IPR000793">
    <property type="entry name" value="ATP_synth_asu_C"/>
</dbReference>
<dbReference type="InterPro" id="IPR038376">
    <property type="entry name" value="ATP_synth_asu_C_sf"/>
</dbReference>
<dbReference type="InterPro" id="IPR033732">
    <property type="entry name" value="ATP_synth_F1_a_nt-bd_dom"/>
</dbReference>
<dbReference type="InterPro" id="IPR005294">
    <property type="entry name" value="ATP_synth_F1_asu"/>
</dbReference>
<dbReference type="InterPro" id="IPR020003">
    <property type="entry name" value="ATPase_a/bsu_AS"/>
</dbReference>
<dbReference type="InterPro" id="IPR004100">
    <property type="entry name" value="ATPase_F1/V1/A1_a/bsu_N"/>
</dbReference>
<dbReference type="InterPro" id="IPR036121">
    <property type="entry name" value="ATPase_F1/V1/A1_a/bsu_N_sf"/>
</dbReference>
<dbReference type="InterPro" id="IPR000194">
    <property type="entry name" value="ATPase_F1/V1/A1_a/bsu_nucl-bd"/>
</dbReference>
<dbReference type="InterPro" id="IPR027417">
    <property type="entry name" value="P-loop_NTPase"/>
</dbReference>
<dbReference type="NCBIfam" id="TIGR00962">
    <property type="entry name" value="atpA"/>
    <property type="match status" value="1"/>
</dbReference>
<dbReference type="NCBIfam" id="NF009884">
    <property type="entry name" value="PRK13343.1"/>
    <property type="match status" value="1"/>
</dbReference>
<dbReference type="PANTHER" id="PTHR48082">
    <property type="entry name" value="ATP SYNTHASE SUBUNIT ALPHA, MITOCHONDRIAL"/>
    <property type="match status" value="1"/>
</dbReference>
<dbReference type="PANTHER" id="PTHR48082:SF2">
    <property type="entry name" value="ATP SYNTHASE SUBUNIT ALPHA, MITOCHONDRIAL"/>
    <property type="match status" value="1"/>
</dbReference>
<dbReference type="Pfam" id="PF00006">
    <property type="entry name" value="ATP-synt_ab"/>
    <property type="match status" value="1"/>
</dbReference>
<dbReference type="Pfam" id="PF00306">
    <property type="entry name" value="ATP-synt_ab_C"/>
    <property type="match status" value="1"/>
</dbReference>
<dbReference type="Pfam" id="PF02874">
    <property type="entry name" value="ATP-synt_ab_N"/>
    <property type="match status" value="1"/>
</dbReference>
<dbReference type="PIRSF" id="PIRSF039088">
    <property type="entry name" value="F_ATPase_subunit_alpha"/>
    <property type="match status" value="1"/>
</dbReference>
<dbReference type="SUPFAM" id="SSF47917">
    <property type="entry name" value="C-terminal domain of alpha and beta subunits of F1 ATP synthase"/>
    <property type="match status" value="1"/>
</dbReference>
<dbReference type="SUPFAM" id="SSF50615">
    <property type="entry name" value="N-terminal domain of alpha and beta subunits of F1 ATP synthase"/>
    <property type="match status" value="1"/>
</dbReference>
<dbReference type="SUPFAM" id="SSF52540">
    <property type="entry name" value="P-loop containing nucleoside triphosphate hydrolases"/>
    <property type="match status" value="1"/>
</dbReference>
<dbReference type="PROSITE" id="PS00152">
    <property type="entry name" value="ATPASE_ALPHA_BETA"/>
    <property type="match status" value="1"/>
</dbReference>
<organism>
    <name type="scientific">Clostridium botulinum (strain Langeland / NCTC 10281 / Type F)</name>
    <dbReference type="NCBI Taxonomy" id="441772"/>
    <lineage>
        <taxon>Bacteria</taxon>
        <taxon>Bacillati</taxon>
        <taxon>Bacillota</taxon>
        <taxon>Clostridia</taxon>
        <taxon>Eubacteriales</taxon>
        <taxon>Clostridiaceae</taxon>
        <taxon>Clostridium</taxon>
    </lineage>
</organism>
<feature type="chain" id="PRO_1000055064" description="ATP synthase subunit alpha">
    <location>
        <begin position="1"/>
        <end position="504"/>
    </location>
</feature>
<feature type="binding site" evidence="1">
    <location>
        <begin position="169"/>
        <end position="176"/>
    </location>
    <ligand>
        <name>ATP</name>
        <dbReference type="ChEBI" id="CHEBI:30616"/>
    </ligand>
</feature>
<feature type="site" description="Required for activity" evidence="1">
    <location>
        <position position="362"/>
    </location>
</feature>
<protein>
    <recommendedName>
        <fullName evidence="1">ATP synthase subunit alpha</fullName>
        <ecNumber evidence="1">7.1.2.2</ecNumber>
    </recommendedName>
    <alternativeName>
        <fullName evidence="1">ATP synthase F1 sector subunit alpha</fullName>
    </alternativeName>
    <alternativeName>
        <fullName evidence="1">F-ATPase subunit alpha</fullName>
    </alternativeName>
</protein>
<accession>A7G9Q7</accession>
<sequence length="504" mass="55420">MNIKPEEITSIIRQQIENFNTNIETIDSGTIIQIGDGIARVYGLEDCMEGELIEFPNDVYGMALNLEQDNVGCVLLGAEEGIKEGNVVKRTKKVVEVPVGEALVGRVVNSLGMPIDGKGPVLTTENRDVEVPAPGVIDRQSVKEPLQTGIKAIDSMIPIGKGQRELIIGDRQTGKTAIAMDTILNQKGKDVICIYVAIGQKQSTVAHIVNDLTKMGAMDYTIVVSSTASDSAPLQYLAPYAGCSMGEYFMHKGKDVLIVYDDLSKHAVAYRTMSLLLRRPPGREAYPGDVFYLHSRLLERSARLSEKLGGGSLTALPIVETLAGDVTAYIPTNVISITDGQIFLESELFNAGQRPAVNAGISVSRVGGNAQIKAMKQVAGTLRLELAQYRELAAFSQFGSDLDKESVKRLEKGKRLVEILKQPQYGPMPVEKEIIILYAAVNNHLIDIPVNKIKEFEKELFNYIDTHYRDIGKDILEHKQLTDELKSKLDKAINDFKNVFLSEI</sequence>
<evidence type="ECO:0000255" key="1">
    <source>
        <dbReference type="HAMAP-Rule" id="MF_01346"/>
    </source>
</evidence>
<gene>
    <name evidence="1" type="primary">atpA</name>
    <name type="ordered locus">CLI_0209</name>
</gene>
<name>ATPA_CLOBL</name>
<comment type="function">
    <text evidence="1">Produces ATP from ADP in the presence of a proton gradient across the membrane. The alpha chain is a regulatory subunit.</text>
</comment>
<comment type="catalytic activity">
    <reaction evidence="1">
        <text>ATP + H2O + 4 H(+)(in) = ADP + phosphate + 5 H(+)(out)</text>
        <dbReference type="Rhea" id="RHEA:57720"/>
        <dbReference type="ChEBI" id="CHEBI:15377"/>
        <dbReference type="ChEBI" id="CHEBI:15378"/>
        <dbReference type="ChEBI" id="CHEBI:30616"/>
        <dbReference type="ChEBI" id="CHEBI:43474"/>
        <dbReference type="ChEBI" id="CHEBI:456216"/>
        <dbReference type="EC" id="7.1.2.2"/>
    </reaction>
</comment>
<comment type="subunit">
    <text evidence="1">F-type ATPases have 2 components, CF(1) - the catalytic core - and CF(0) - the membrane proton channel. CF(1) has five subunits: alpha(3), beta(3), gamma(1), delta(1), epsilon(1). CF(0) has three main subunits: a(1), b(2) and c(9-12). The alpha and beta chains form an alternating ring which encloses part of the gamma chain. CF(1) is attached to CF(0) by a central stalk formed by the gamma and epsilon chains, while a peripheral stalk is formed by the delta and b chains.</text>
</comment>
<comment type="subcellular location">
    <subcellularLocation>
        <location evidence="1">Cell membrane</location>
        <topology evidence="1">Peripheral membrane protein</topology>
    </subcellularLocation>
</comment>
<comment type="similarity">
    <text evidence="1">Belongs to the ATPase alpha/beta chains family.</text>
</comment>